<gene>
    <name type="ordered locus">aq_1997</name>
</gene>
<reference key="1">
    <citation type="journal article" date="1998" name="Nature">
        <title>The complete genome of the hyperthermophilic bacterium Aquifex aeolicus.</title>
        <authorList>
            <person name="Deckert G."/>
            <person name="Warren P.V."/>
            <person name="Gaasterland T."/>
            <person name="Young W.G."/>
            <person name="Lenox A.L."/>
            <person name="Graham D.E."/>
            <person name="Overbeek R."/>
            <person name="Snead M.A."/>
            <person name="Keller M."/>
            <person name="Aujay M."/>
            <person name="Huber R."/>
            <person name="Feldman R.A."/>
            <person name="Short J.M."/>
            <person name="Olsen G.J."/>
            <person name="Swanson R.V."/>
        </authorList>
    </citation>
    <scope>NUCLEOTIDE SEQUENCE [LARGE SCALE GENOMIC DNA]</scope>
    <source>
        <strain>VF5</strain>
    </source>
</reference>
<organism>
    <name type="scientific">Aquifex aeolicus (strain VF5)</name>
    <dbReference type="NCBI Taxonomy" id="224324"/>
    <lineage>
        <taxon>Bacteria</taxon>
        <taxon>Pseudomonadati</taxon>
        <taxon>Aquificota</taxon>
        <taxon>Aquificia</taxon>
        <taxon>Aquificales</taxon>
        <taxon>Aquificaceae</taxon>
        <taxon>Aquifex</taxon>
    </lineage>
</organism>
<dbReference type="EC" id="3.1.1.45"/>
<dbReference type="EMBL" id="AE000657">
    <property type="protein sequence ID" value="AAC07773.1"/>
    <property type="molecule type" value="Genomic_DNA"/>
</dbReference>
<dbReference type="PIR" id="F70471">
    <property type="entry name" value="F70471"/>
</dbReference>
<dbReference type="RefSeq" id="NP_214371.1">
    <property type="nucleotide sequence ID" value="NC_000918.1"/>
</dbReference>
<dbReference type="RefSeq" id="WP_010881307.1">
    <property type="nucleotide sequence ID" value="NC_000918.1"/>
</dbReference>
<dbReference type="SMR" id="O67802"/>
<dbReference type="FunCoup" id="O67802">
    <property type="interactions" value="259"/>
</dbReference>
<dbReference type="STRING" id="224324.aq_1997"/>
<dbReference type="ESTHER" id="aquae-dlhh">
    <property type="family name" value="Dienelactone_hydrolase"/>
</dbReference>
<dbReference type="EnsemblBacteria" id="AAC07773">
    <property type="protein sequence ID" value="AAC07773"/>
    <property type="gene ID" value="aq_1997"/>
</dbReference>
<dbReference type="KEGG" id="aae:aq_1997"/>
<dbReference type="eggNOG" id="COG0412">
    <property type="taxonomic scope" value="Bacteria"/>
</dbReference>
<dbReference type="HOGENOM" id="CLU_054590_7_2_0"/>
<dbReference type="InParanoid" id="O67802"/>
<dbReference type="OrthoDB" id="9771666at2"/>
<dbReference type="Proteomes" id="UP000000798">
    <property type="component" value="Chromosome"/>
</dbReference>
<dbReference type="GO" id="GO:0008806">
    <property type="term" value="F:carboxymethylenebutenolidase activity"/>
    <property type="evidence" value="ECO:0007669"/>
    <property type="project" value="UniProtKB-EC"/>
</dbReference>
<dbReference type="Gene3D" id="3.40.50.1820">
    <property type="entry name" value="alpha/beta hydrolase"/>
    <property type="match status" value="1"/>
</dbReference>
<dbReference type="InterPro" id="IPR029058">
    <property type="entry name" value="AB_hydrolase_fold"/>
</dbReference>
<dbReference type="InterPro" id="IPR002925">
    <property type="entry name" value="Dienelactn_hydro"/>
</dbReference>
<dbReference type="InterPro" id="IPR051049">
    <property type="entry name" value="Dienelactone_hydrolase-like"/>
</dbReference>
<dbReference type="PANTHER" id="PTHR46623:SF6">
    <property type="entry name" value="ALPHA_BETA-HYDROLASES SUPERFAMILY PROTEIN"/>
    <property type="match status" value="1"/>
</dbReference>
<dbReference type="PANTHER" id="PTHR46623">
    <property type="entry name" value="CARBOXYMETHYLENEBUTENOLIDASE-RELATED"/>
    <property type="match status" value="1"/>
</dbReference>
<dbReference type="Pfam" id="PF01738">
    <property type="entry name" value="DLH"/>
    <property type="match status" value="1"/>
</dbReference>
<dbReference type="SUPFAM" id="SSF53474">
    <property type="entry name" value="alpha/beta-Hydrolases"/>
    <property type="match status" value="1"/>
</dbReference>
<feature type="chain" id="PRO_0000161576" description="Putative carboxymethylenebutenolidase">
    <location>
        <begin position="1"/>
        <end position="231"/>
    </location>
</feature>
<feature type="active site" evidence="1">
    <location>
        <position position="118"/>
    </location>
</feature>
<feature type="active site" evidence="1">
    <location>
        <position position="167"/>
    </location>
</feature>
<feature type="active site" evidence="1">
    <location>
        <position position="199"/>
    </location>
</feature>
<comment type="catalytic activity">
    <reaction>
        <text>2-(5-oxo-2,5-dihydrofuran-2-ylidene)acetate + H2O = 4-oxohex-2-enedioate + H(+)</text>
        <dbReference type="Rhea" id="RHEA:12372"/>
        <dbReference type="ChEBI" id="CHEBI:12040"/>
        <dbReference type="ChEBI" id="CHEBI:15377"/>
        <dbReference type="ChEBI" id="CHEBI:15378"/>
        <dbReference type="ChEBI" id="CHEBI:57263"/>
        <dbReference type="EC" id="3.1.1.45"/>
    </reaction>
</comment>
<comment type="similarity">
    <text evidence="2">Belongs to the dienelactone hydrolase family.</text>
</comment>
<sequence>MGQMVEFEKNGVKVRGYIATPKWAGPAVLVFHEWWGLESPLSNIKEICDKLADEGFVAFAPDFYKGQYADNPDDAGKLMTEMFEKRMDEVDRIFQASVEFVKECRYTYPKKVGITGFCCGGTLAMYFAAKFPEMVDASLPFYGLPQLTQINAENIKVPIFFILAEKDEFVNNDEVIDIAKTVWKNGVDVQVKVFSGVTHAFLNEKREDVYDPKRACEAWELAVNFFKTYLK</sequence>
<proteinExistence type="inferred from homology"/>
<protein>
    <recommendedName>
        <fullName>Putative carboxymethylenebutenolidase</fullName>
        <ecNumber>3.1.1.45</ecNumber>
    </recommendedName>
    <alternativeName>
        <fullName>Dienelactone hydrolase</fullName>
        <shortName>DLH</shortName>
    </alternativeName>
</protein>
<evidence type="ECO:0000250" key="1"/>
<evidence type="ECO:0000305" key="2"/>
<name>DLHH_AQUAE</name>
<accession>O67802</accession>
<keyword id="KW-0378">Hydrolase</keyword>
<keyword id="KW-1185">Reference proteome</keyword>